<comment type="function">
    <text evidence="1">Component of the acetyl coenzyme A carboxylase (ACC) complex. First, biotin carboxylase catalyzes the carboxylation of biotin on its carrier protein (BCCP) and then the CO(2) group is transferred by the carboxyltransferase to acetyl-CoA to form malonyl-CoA.</text>
</comment>
<comment type="catalytic activity">
    <reaction evidence="1">
        <text>N(6)-carboxybiotinyl-L-lysyl-[protein] + acetyl-CoA = N(6)-biotinyl-L-lysyl-[protein] + malonyl-CoA</text>
        <dbReference type="Rhea" id="RHEA:54728"/>
        <dbReference type="Rhea" id="RHEA-COMP:10505"/>
        <dbReference type="Rhea" id="RHEA-COMP:10506"/>
        <dbReference type="ChEBI" id="CHEBI:57288"/>
        <dbReference type="ChEBI" id="CHEBI:57384"/>
        <dbReference type="ChEBI" id="CHEBI:83144"/>
        <dbReference type="ChEBI" id="CHEBI:83145"/>
        <dbReference type="EC" id="2.1.3.15"/>
    </reaction>
</comment>
<comment type="pathway">
    <text evidence="1">Lipid metabolism; malonyl-CoA biosynthesis; malonyl-CoA from acetyl-CoA: step 1/1.</text>
</comment>
<comment type="subunit">
    <text evidence="1">Acetyl-CoA carboxylase is a heterohexamer composed of biotin carboxyl carrier protein (AccB), biotin carboxylase (AccC) and two subunits each of ACCase subunit alpha (AccA) and ACCase subunit beta (AccD).</text>
</comment>
<comment type="subcellular location">
    <subcellularLocation>
        <location evidence="1">Cytoplasm</location>
    </subcellularLocation>
</comment>
<comment type="similarity">
    <text evidence="1">Belongs to the AccA family.</text>
</comment>
<name>ACCA_FRATH</name>
<organism>
    <name type="scientific">Francisella tularensis subsp. holarctica (strain LVS)</name>
    <dbReference type="NCBI Taxonomy" id="376619"/>
    <lineage>
        <taxon>Bacteria</taxon>
        <taxon>Pseudomonadati</taxon>
        <taxon>Pseudomonadota</taxon>
        <taxon>Gammaproteobacteria</taxon>
        <taxon>Thiotrichales</taxon>
        <taxon>Francisellaceae</taxon>
        <taxon>Francisella</taxon>
    </lineage>
</organism>
<proteinExistence type="inferred from homology"/>
<protein>
    <recommendedName>
        <fullName evidence="1">Acetyl-coenzyme A carboxylase carboxyl transferase subunit alpha</fullName>
        <shortName evidence="1">ACCase subunit alpha</shortName>
        <shortName evidence="1">Acetyl-CoA carboxylase carboxyltransferase subunit alpha</shortName>
        <ecNumber evidence="1">2.1.3.15</ecNumber>
    </recommendedName>
</protein>
<dbReference type="EC" id="2.1.3.15" evidence="1"/>
<dbReference type="EMBL" id="AM233362">
    <property type="protein sequence ID" value="CAJ78736.1"/>
    <property type="molecule type" value="Genomic_DNA"/>
</dbReference>
<dbReference type="RefSeq" id="WP_003018337.1">
    <property type="nucleotide sequence ID" value="NZ_CP009694.1"/>
</dbReference>
<dbReference type="SMR" id="Q2A5B4"/>
<dbReference type="KEGG" id="ftl:FTL_0295"/>
<dbReference type="UniPathway" id="UPA00655">
    <property type="reaction ID" value="UER00711"/>
</dbReference>
<dbReference type="Proteomes" id="UP000001944">
    <property type="component" value="Chromosome"/>
</dbReference>
<dbReference type="GO" id="GO:0009317">
    <property type="term" value="C:acetyl-CoA carboxylase complex"/>
    <property type="evidence" value="ECO:0007669"/>
    <property type="project" value="InterPro"/>
</dbReference>
<dbReference type="GO" id="GO:0003989">
    <property type="term" value="F:acetyl-CoA carboxylase activity"/>
    <property type="evidence" value="ECO:0007669"/>
    <property type="project" value="InterPro"/>
</dbReference>
<dbReference type="GO" id="GO:0005524">
    <property type="term" value="F:ATP binding"/>
    <property type="evidence" value="ECO:0007669"/>
    <property type="project" value="UniProtKB-KW"/>
</dbReference>
<dbReference type="GO" id="GO:0016743">
    <property type="term" value="F:carboxyl- or carbamoyltransferase activity"/>
    <property type="evidence" value="ECO:0007669"/>
    <property type="project" value="UniProtKB-UniRule"/>
</dbReference>
<dbReference type="GO" id="GO:0006633">
    <property type="term" value="P:fatty acid biosynthetic process"/>
    <property type="evidence" value="ECO:0007669"/>
    <property type="project" value="UniProtKB-KW"/>
</dbReference>
<dbReference type="GO" id="GO:2001295">
    <property type="term" value="P:malonyl-CoA biosynthetic process"/>
    <property type="evidence" value="ECO:0007669"/>
    <property type="project" value="UniProtKB-UniRule"/>
</dbReference>
<dbReference type="Gene3D" id="3.90.226.10">
    <property type="entry name" value="2-enoyl-CoA Hydratase, Chain A, domain 1"/>
    <property type="match status" value="1"/>
</dbReference>
<dbReference type="HAMAP" id="MF_00823">
    <property type="entry name" value="AcetylCoA_CT_alpha"/>
    <property type="match status" value="1"/>
</dbReference>
<dbReference type="InterPro" id="IPR001095">
    <property type="entry name" value="Acetyl_CoA_COase_a_su"/>
</dbReference>
<dbReference type="InterPro" id="IPR029045">
    <property type="entry name" value="ClpP/crotonase-like_dom_sf"/>
</dbReference>
<dbReference type="InterPro" id="IPR011763">
    <property type="entry name" value="COA_CT_C"/>
</dbReference>
<dbReference type="NCBIfam" id="TIGR00513">
    <property type="entry name" value="accA"/>
    <property type="match status" value="1"/>
</dbReference>
<dbReference type="NCBIfam" id="NF041504">
    <property type="entry name" value="AccA_sub"/>
    <property type="match status" value="1"/>
</dbReference>
<dbReference type="NCBIfam" id="NF004344">
    <property type="entry name" value="PRK05724.1"/>
    <property type="match status" value="1"/>
</dbReference>
<dbReference type="PANTHER" id="PTHR42853">
    <property type="entry name" value="ACETYL-COENZYME A CARBOXYLASE CARBOXYL TRANSFERASE SUBUNIT ALPHA"/>
    <property type="match status" value="1"/>
</dbReference>
<dbReference type="PANTHER" id="PTHR42853:SF3">
    <property type="entry name" value="ACETYL-COENZYME A CARBOXYLASE CARBOXYL TRANSFERASE SUBUNIT ALPHA, CHLOROPLASTIC"/>
    <property type="match status" value="1"/>
</dbReference>
<dbReference type="Pfam" id="PF03255">
    <property type="entry name" value="ACCA"/>
    <property type="match status" value="1"/>
</dbReference>
<dbReference type="PRINTS" id="PR01069">
    <property type="entry name" value="ACCCTRFRASEA"/>
</dbReference>
<dbReference type="SUPFAM" id="SSF52096">
    <property type="entry name" value="ClpP/crotonase"/>
    <property type="match status" value="1"/>
</dbReference>
<dbReference type="PROSITE" id="PS50989">
    <property type="entry name" value="COA_CT_CTER"/>
    <property type="match status" value="1"/>
</dbReference>
<gene>
    <name evidence="1" type="primary">accA</name>
    <name type="ordered locus">FTL_0295</name>
</gene>
<keyword id="KW-0067">ATP-binding</keyword>
<keyword id="KW-0963">Cytoplasm</keyword>
<keyword id="KW-0275">Fatty acid biosynthesis</keyword>
<keyword id="KW-0276">Fatty acid metabolism</keyword>
<keyword id="KW-0444">Lipid biosynthesis</keyword>
<keyword id="KW-0443">Lipid metabolism</keyword>
<keyword id="KW-0547">Nucleotide-binding</keyword>
<keyword id="KW-1185">Reference proteome</keyword>
<keyword id="KW-0808">Transferase</keyword>
<evidence type="ECO:0000255" key="1">
    <source>
        <dbReference type="HAMAP-Rule" id="MF_00823"/>
    </source>
</evidence>
<evidence type="ECO:0000255" key="2">
    <source>
        <dbReference type="PROSITE-ProRule" id="PRU01137"/>
    </source>
</evidence>
<sequence>MNYLDFESKIKEIEDKITSLSHVFEDEKTEAEIKKLSKKRLELMESTYSKLTDWQVVQLSRHPDRPYFKDLLPLIFTDFQELHGDRTFGDDLAVIGGLAKLNNKPVMVIGQEKGRDTKSKIKHNFGMMHPEGYRKALRLMKLAEKFNMPVVTFIDTPGAYPGIKAEERGQSEAIARNLLEMSALKVPVVCIVIGEGCSGGALGIGVGDRLLMLQYSYFATISPEGCASILHKTAEKASEVTQMMNITSGRLKELKIVDEVIPEPLGGAHRDYETTATNIRKAVAAELKILSEMTVEQRNSRRYDKLMSFGRFKEA</sequence>
<accession>Q2A5B4</accession>
<feature type="chain" id="PRO_1000062621" description="Acetyl-coenzyme A carboxylase carboxyl transferase subunit alpha">
    <location>
        <begin position="1"/>
        <end position="315"/>
    </location>
</feature>
<feature type="domain" description="CoA carboxyltransferase C-terminal" evidence="2">
    <location>
        <begin position="36"/>
        <end position="289"/>
    </location>
</feature>
<reference key="1">
    <citation type="submission" date="2006-03" db="EMBL/GenBank/DDBJ databases">
        <title>Complete genome sequence of Francisella tularensis LVS (Live Vaccine Strain).</title>
        <authorList>
            <person name="Chain P."/>
            <person name="Larimer F."/>
            <person name="Land M."/>
            <person name="Stilwagen S."/>
            <person name="Larsson P."/>
            <person name="Bearden S."/>
            <person name="Chu M."/>
            <person name="Oyston P."/>
            <person name="Forsman M."/>
            <person name="Andersson S."/>
            <person name="Lindler L."/>
            <person name="Titball R."/>
            <person name="Garcia E."/>
        </authorList>
    </citation>
    <scope>NUCLEOTIDE SEQUENCE [LARGE SCALE GENOMIC DNA]</scope>
    <source>
        <strain>LVS</strain>
    </source>
</reference>